<proteinExistence type="evidence at transcript level"/>
<comment type="function">
    <text evidence="5">Probable secreted effector that translocates into the nuclei of host cells to reprogram the expression of targeted genes by binding on effector binding elements in rice.</text>
</comment>
<comment type="subcellular location">
    <subcellularLocation>
        <location evidence="1">Secreted</location>
    </subcellularLocation>
    <subcellularLocation>
        <location evidence="5">Host nucleus</location>
    </subcellularLocation>
</comment>
<comment type="induction">
    <text evidence="3">Expressed during multiple necrotrophy, the late stage of host plant infection.</text>
</comment>
<protein>
    <recommendedName>
        <fullName evidence="4">Host transcription reprogramming factor 9</fullName>
    </recommendedName>
    <alternativeName>
        <fullName evidence="4">Secreted nuclear effector HTR9</fullName>
    </alternativeName>
</protein>
<sequence length="83" mass="9009">MQFSKITLAIVLYALGTAALPTASRCAGAPGRDVAATRGAKLQAREEDKPTPQYRCDKCEKEFVKGNDFFNHGGRGHCKMSGY</sequence>
<reference key="1">
    <citation type="journal article" date="2005" name="Nature">
        <title>The genome sequence of the rice blast fungus Magnaporthe grisea.</title>
        <authorList>
            <person name="Dean R.A."/>
            <person name="Talbot N.J."/>
            <person name="Ebbole D.J."/>
            <person name="Farman M.L."/>
            <person name="Mitchell T.K."/>
            <person name="Orbach M.J."/>
            <person name="Thon M.R."/>
            <person name="Kulkarni R."/>
            <person name="Xu J.-R."/>
            <person name="Pan H."/>
            <person name="Read N.D."/>
            <person name="Lee Y.-H."/>
            <person name="Carbone I."/>
            <person name="Brown D."/>
            <person name="Oh Y.Y."/>
            <person name="Donofrio N."/>
            <person name="Jeong J.S."/>
            <person name="Soanes D.M."/>
            <person name="Djonovic S."/>
            <person name="Kolomiets E."/>
            <person name="Rehmeyer C."/>
            <person name="Li W."/>
            <person name="Harding M."/>
            <person name="Kim S."/>
            <person name="Lebrun M.-H."/>
            <person name="Bohnert H."/>
            <person name="Coughlan S."/>
            <person name="Butler J."/>
            <person name="Calvo S.E."/>
            <person name="Ma L.-J."/>
            <person name="Nicol R."/>
            <person name="Purcell S."/>
            <person name="Nusbaum C."/>
            <person name="Galagan J.E."/>
            <person name="Birren B.W."/>
        </authorList>
    </citation>
    <scope>NUCLEOTIDE SEQUENCE [LARGE SCALE GENOMIC DNA]</scope>
    <source>
        <strain>70-15 / ATCC MYA-4617 / FGSC 8958</strain>
    </source>
</reference>
<reference key="2">
    <citation type="journal article" date="2020" name="Nat. Commun.">
        <title>Two nuclear effectors of the rice blast fungus modulate host immunity via transcriptional reprogramming.</title>
        <authorList>
            <person name="Kim S."/>
            <person name="Kim C.Y."/>
            <person name="Park S.Y."/>
            <person name="Kim K.T."/>
            <person name="Jeon J."/>
            <person name="Chung H."/>
            <person name="Choi G."/>
            <person name="Kwon S."/>
            <person name="Choi J."/>
            <person name="Jeon J."/>
            <person name="Jeon J.S."/>
            <person name="Khang C.H."/>
            <person name="Kang S."/>
            <person name="Lee Y.H."/>
        </authorList>
    </citation>
    <scope>FUNCTION</scope>
    <scope>INDUCTION</scope>
</reference>
<feature type="signal peptide" evidence="1">
    <location>
        <begin position="1"/>
        <end position="19"/>
    </location>
</feature>
<feature type="chain" id="PRO_5003467043" description="Host transcription reprogramming factor 9">
    <location>
        <begin position="20"/>
        <end position="83"/>
    </location>
</feature>
<feature type="zinc finger region" description="C2H2-type" evidence="2">
    <location>
        <begin position="54"/>
        <end position="77"/>
    </location>
</feature>
<accession>G4NKW5</accession>
<name>HTR9_PYRO7</name>
<dbReference type="EMBL" id="CM001237">
    <property type="protein sequence ID" value="EHA46657.1"/>
    <property type="molecule type" value="Genomic_DNA"/>
</dbReference>
<dbReference type="RefSeq" id="XP_003721400.1">
    <property type="nucleotide sequence ID" value="XM_003721352.1"/>
</dbReference>
<dbReference type="EnsemblFungi" id="MGG_10556T0">
    <property type="protein sequence ID" value="MGG_10556T0"/>
    <property type="gene ID" value="MGG_10556"/>
</dbReference>
<dbReference type="GeneID" id="2682169"/>
<dbReference type="KEGG" id="mgr:MGG_10556"/>
<dbReference type="VEuPathDB" id="FungiDB:MGG_10556"/>
<dbReference type="HOGENOM" id="CLU_2543023_0_0_1"/>
<dbReference type="InParanoid" id="G4NKW5"/>
<dbReference type="Proteomes" id="UP000009058">
    <property type="component" value="Chromosome 7"/>
</dbReference>
<dbReference type="GO" id="GO:0005576">
    <property type="term" value="C:extracellular region"/>
    <property type="evidence" value="ECO:0007669"/>
    <property type="project" value="UniProtKB-SubCell"/>
</dbReference>
<dbReference type="GO" id="GO:0042025">
    <property type="term" value="C:host cell nucleus"/>
    <property type="evidence" value="ECO:0007669"/>
    <property type="project" value="UniProtKB-SubCell"/>
</dbReference>
<dbReference type="GO" id="GO:0008270">
    <property type="term" value="F:zinc ion binding"/>
    <property type="evidence" value="ECO:0007669"/>
    <property type="project" value="UniProtKB-KW"/>
</dbReference>
<dbReference type="InterPro" id="IPR013087">
    <property type="entry name" value="Znf_C2H2_type"/>
</dbReference>
<dbReference type="PROSITE" id="PS00028">
    <property type="entry name" value="ZINC_FINGER_C2H2_1"/>
    <property type="match status" value="1"/>
</dbReference>
<evidence type="ECO:0000255" key="1"/>
<evidence type="ECO:0000255" key="2">
    <source>
        <dbReference type="PROSITE-ProRule" id="PRU00042"/>
    </source>
</evidence>
<evidence type="ECO:0000269" key="3">
    <source>
    </source>
</evidence>
<evidence type="ECO:0000303" key="4">
    <source>
    </source>
</evidence>
<evidence type="ECO:0000305" key="5">
    <source>
    </source>
</evidence>
<keyword id="KW-1048">Host nucleus</keyword>
<keyword id="KW-0479">Metal-binding</keyword>
<keyword id="KW-1185">Reference proteome</keyword>
<keyword id="KW-0964">Secreted</keyword>
<keyword id="KW-0732">Signal</keyword>
<keyword id="KW-0804">Transcription</keyword>
<keyword id="KW-0805">Transcription regulation</keyword>
<keyword id="KW-0843">Virulence</keyword>
<keyword id="KW-0862">Zinc</keyword>
<keyword id="KW-0863">Zinc-finger</keyword>
<organism>
    <name type="scientific">Pyricularia oryzae (strain 70-15 / ATCC MYA-4617 / FGSC 8958)</name>
    <name type="common">Rice blast fungus</name>
    <name type="synonym">Magnaporthe oryzae</name>
    <dbReference type="NCBI Taxonomy" id="242507"/>
    <lineage>
        <taxon>Eukaryota</taxon>
        <taxon>Fungi</taxon>
        <taxon>Dikarya</taxon>
        <taxon>Ascomycota</taxon>
        <taxon>Pezizomycotina</taxon>
        <taxon>Sordariomycetes</taxon>
        <taxon>Sordariomycetidae</taxon>
        <taxon>Magnaporthales</taxon>
        <taxon>Pyriculariaceae</taxon>
        <taxon>Pyricularia</taxon>
    </lineage>
</organism>
<gene>
    <name evidence="4" type="primary">HTR9</name>
    <name type="ORF">MGG_10556</name>
</gene>